<evidence type="ECO:0000255" key="1">
    <source>
        <dbReference type="HAMAP-Rule" id="MF_00292"/>
    </source>
</evidence>
<evidence type="ECO:0000305" key="2"/>
<name>RS28_PYRIL</name>
<reference key="1">
    <citation type="submission" date="2006-12" db="EMBL/GenBank/DDBJ databases">
        <title>Complete sequence of Pyrobaculum islandicum DSM 4184.</title>
        <authorList>
            <person name="Copeland A."/>
            <person name="Lucas S."/>
            <person name="Lapidus A."/>
            <person name="Barry K."/>
            <person name="Detter J.C."/>
            <person name="Glavina del Rio T."/>
            <person name="Dalin E."/>
            <person name="Tice H."/>
            <person name="Pitluck S."/>
            <person name="Meincke L."/>
            <person name="Brettin T."/>
            <person name="Bruce D."/>
            <person name="Han C."/>
            <person name="Tapia R."/>
            <person name="Gilna P."/>
            <person name="Schmutz J."/>
            <person name="Larimer F."/>
            <person name="Land M."/>
            <person name="Hauser L."/>
            <person name="Kyrpides N."/>
            <person name="Mikhailova N."/>
            <person name="Cozen A.E."/>
            <person name="Fitz-Gibbon S.T."/>
            <person name="House C.H."/>
            <person name="Saltikov C."/>
            <person name="Lowe T."/>
            <person name="Richardson P."/>
        </authorList>
    </citation>
    <scope>NUCLEOTIDE SEQUENCE [LARGE SCALE GENOMIC DNA]</scope>
    <source>
        <strain>DSM 4184 / JCM 9189 / GEO3</strain>
    </source>
</reference>
<feature type="chain" id="PRO_1000115086" description="Small ribosomal subunit protein eS28">
    <location>
        <begin position="1"/>
        <end position="77"/>
    </location>
</feature>
<organism>
    <name type="scientific">Pyrobaculum islandicum (strain DSM 4184 / JCM 9189 / GEO3)</name>
    <dbReference type="NCBI Taxonomy" id="384616"/>
    <lineage>
        <taxon>Archaea</taxon>
        <taxon>Thermoproteota</taxon>
        <taxon>Thermoprotei</taxon>
        <taxon>Thermoproteales</taxon>
        <taxon>Thermoproteaceae</taxon>
        <taxon>Pyrobaculum</taxon>
    </lineage>
</organism>
<protein>
    <recommendedName>
        <fullName evidence="1">Small ribosomal subunit protein eS28</fullName>
    </recommendedName>
    <alternativeName>
        <fullName evidence="2">30S ribosomal protein S28e</fullName>
    </alternativeName>
</protein>
<keyword id="KW-0687">Ribonucleoprotein</keyword>
<keyword id="KW-0689">Ribosomal protein</keyword>
<dbReference type="EMBL" id="CP000504">
    <property type="protein sequence ID" value="ABL87765.1"/>
    <property type="molecule type" value="Genomic_DNA"/>
</dbReference>
<dbReference type="RefSeq" id="WP_011762341.1">
    <property type="nucleotide sequence ID" value="NC_008701.1"/>
</dbReference>
<dbReference type="SMR" id="A1RS33"/>
<dbReference type="STRING" id="384616.Pisl_0587"/>
<dbReference type="GeneID" id="4617607"/>
<dbReference type="KEGG" id="pis:Pisl_0587"/>
<dbReference type="eggNOG" id="arCOG04314">
    <property type="taxonomic scope" value="Archaea"/>
</dbReference>
<dbReference type="HOGENOM" id="CLU_178987_2_1_2"/>
<dbReference type="OrthoDB" id="7620at2157"/>
<dbReference type="Proteomes" id="UP000002595">
    <property type="component" value="Chromosome"/>
</dbReference>
<dbReference type="GO" id="GO:0022627">
    <property type="term" value="C:cytosolic small ribosomal subunit"/>
    <property type="evidence" value="ECO:0007669"/>
    <property type="project" value="TreeGrafter"/>
</dbReference>
<dbReference type="GO" id="GO:0003735">
    <property type="term" value="F:structural constituent of ribosome"/>
    <property type="evidence" value="ECO:0007669"/>
    <property type="project" value="InterPro"/>
</dbReference>
<dbReference type="GO" id="GO:0030490">
    <property type="term" value="P:maturation of SSU-rRNA"/>
    <property type="evidence" value="ECO:0007669"/>
    <property type="project" value="TreeGrafter"/>
</dbReference>
<dbReference type="GO" id="GO:0000028">
    <property type="term" value="P:ribosomal small subunit assembly"/>
    <property type="evidence" value="ECO:0007669"/>
    <property type="project" value="TreeGrafter"/>
</dbReference>
<dbReference type="GO" id="GO:0006412">
    <property type="term" value="P:translation"/>
    <property type="evidence" value="ECO:0007669"/>
    <property type="project" value="UniProtKB-UniRule"/>
</dbReference>
<dbReference type="CDD" id="cd04457">
    <property type="entry name" value="S1_S28E"/>
    <property type="match status" value="1"/>
</dbReference>
<dbReference type="FunFam" id="2.40.50.140:FF:000145">
    <property type="entry name" value="30S ribosomal protein S28e"/>
    <property type="match status" value="1"/>
</dbReference>
<dbReference type="Gene3D" id="2.40.50.140">
    <property type="entry name" value="Nucleic acid-binding proteins"/>
    <property type="match status" value="1"/>
</dbReference>
<dbReference type="HAMAP" id="MF_00292">
    <property type="entry name" value="Ribosomal_eS28"/>
    <property type="match status" value="1"/>
</dbReference>
<dbReference type="InterPro" id="IPR012340">
    <property type="entry name" value="NA-bd_OB-fold"/>
</dbReference>
<dbReference type="InterPro" id="IPR000289">
    <property type="entry name" value="Ribosomal_eS28"/>
</dbReference>
<dbReference type="InterPro" id="IPR028626">
    <property type="entry name" value="Ribosomal_eS28_CS"/>
</dbReference>
<dbReference type="NCBIfam" id="NF003080">
    <property type="entry name" value="PRK04007.1"/>
    <property type="match status" value="1"/>
</dbReference>
<dbReference type="PANTHER" id="PTHR10769">
    <property type="entry name" value="40S RIBOSOMAL PROTEIN S28"/>
    <property type="match status" value="1"/>
</dbReference>
<dbReference type="PANTHER" id="PTHR10769:SF3">
    <property type="entry name" value="SMALL RIBOSOMAL SUBUNIT PROTEIN ES28"/>
    <property type="match status" value="1"/>
</dbReference>
<dbReference type="Pfam" id="PF01200">
    <property type="entry name" value="Ribosomal_S28e"/>
    <property type="match status" value="1"/>
</dbReference>
<dbReference type="SUPFAM" id="SSF50249">
    <property type="entry name" value="Nucleic acid-binding proteins"/>
    <property type="match status" value="1"/>
</dbReference>
<dbReference type="PROSITE" id="PS00961">
    <property type="entry name" value="RIBOSOMAL_S28E"/>
    <property type="match status" value="1"/>
</dbReference>
<accession>A1RS33</accession>
<sequence>MSSEVKFSPYEDAVAALVIQILGRTGVAGEVTQVKVKILEGRDKGRILTRNIKGPVRLGDIVMLRETEREARRITAR</sequence>
<gene>
    <name evidence="1" type="primary">rps28e</name>
    <name type="ordered locus">Pisl_0587</name>
</gene>
<proteinExistence type="inferred from homology"/>
<comment type="similarity">
    <text evidence="1">Belongs to the eukaryotic ribosomal protein eS28 family.</text>
</comment>